<comment type="function">
    <text evidence="1">Catalyzes the formation of phosphatidylethanolamine (PtdEtn) from phosphatidylserine (PtdSer).</text>
</comment>
<comment type="catalytic activity">
    <reaction evidence="1">
        <text>a 1,2-diacyl-sn-glycero-3-phospho-L-serine + H(+) = a 1,2-diacyl-sn-glycero-3-phosphoethanolamine + CO2</text>
        <dbReference type="Rhea" id="RHEA:20828"/>
        <dbReference type="ChEBI" id="CHEBI:15378"/>
        <dbReference type="ChEBI" id="CHEBI:16526"/>
        <dbReference type="ChEBI" id="CHEBI:57262"/>
        <dbReference type="ChEBI" id="CHEBI:64612"/>
        <dbReference type="EC" id="4.1.1.65"/>
    </reaction>
</comment>
<comment type="cofactor">
    <cofactor evidence="1">
        <name>pyruvate</name>
        <dbReference type="ChEBI" id="CHEBI:15361"/>
    </cofactor>
    <text evidence="1">Binds 1 pyruvoyl group covalently per subunit.</text>
</comment>
<comment type="pathway">
    <text evidence="1">Phospholipid metabolism; phosphatidylethanolamine biosynthesis; phosphatidylethanolamine from CDP-diacylglycerol: step 2/2.</text>
</comment>
<comment type="subunit">
    <text evidence="1">Heterodimer of a large membrane-associated beta subunit and a small pyruvoyl-containing alpha subunit.</text>
</comment>
<comment type="subcellular location">
    <subcellularLocation>
        <location evidence="1">Cell membrane</location>
        <topology evidence="1">Peripheral membrane protein</topology>
    </subcellularLocation>
</comment>
<comment type="PTM">
    <text evidence="1">Is synthesized initially as an inactive proenzyme. Formation of the active enzyme involves a self-maturation process in which the active site pyruvoyl group is generated from an internal serine residue via an autocatalytic post-translational modification. Two non-identical subunits are generated from the proenzyme in this reaction, and the pyruvate is formed at the N-terminus of the alpha chain, which is derived from the carboxyl end of the proenzyme. The autoendoproteolytic cleavage occurs by a canonical serine protease mechanism, in which the side chain hydroxyl group of the serine supplies its oxygen atom to form the C-terminus of the beta chain, while the remainder of the serine residue undergoes an oxidative deamination to produce ammonia and the pyruvoyl prosthetic group on the alpha chain. During this reaction, the Ser that is part of the protease active site of the proenzyme becomes the pyruvoyl prosthetic group, which constitutes an essential element of the active site of the mature decarboxylase.</text>
</comment>
<comment type="similarity">
    <text evidence="1">Belongs to the phosphatidylserine decarboxylase family. PSD-B subfamily. Prokaryotic type I sub-subfamily.</text>
</comment>
<proteinExistence type="inferred from homology"/>
<organism>
    <name type="scientific">Histophilus somni (strain 129Pt)</name>
    <name type="common">Haemophilus somnus</name>
    <dbReference type="NCBI Taxonomy" id="205914"/>
    <lineage>
        <taxon>Bacteria</taxon>
        <taxon>Pseudomonadati</taxon>
        <taxon>Pseudomonadota</taxon>
        <taxon>Gammaproteobacteria</taxon>
        <taxon>Pasteurellales</taxon>
        <taxon>Pasteurellaceae</taxon>
        <taxon>Histophilus</taxon>
    </lineage>
</organism>
<protein>
    <recommendedName>
        <fullName evidence="1">Phosphatidylserine decarboxylase proenzyme</fullName>
        <ecNumber evidence="1">4.1.1.65</ecNumber>
    </recommendedName>
    <component>
        <recommendedName>
            <fullName evidence="1">Phosphatidylserine decarboxylase alpha chain</fullName>
        </recommendedName>
    </component>
    <component>
        <recommendedName>
            <fullName evidence="1">Phosphatidylserine decarboxylase beta chain</fullName>
        </recommendedName>
    </component>
</protein>
<keyword id="KW-1003">Cell membrane</keyword>
<keyword id="KW-0210">Decarboxylase</keyword>
<keyword id="KW-0444">Lipid biosynthesis</keyword>
<keyword id="KW-0443">Lipid metabolism</keyword>
<keyword id="KW-0456">Lyase</keyword>
<keyword id="KW-0472">Membrane</keyword>
<keyword id="KW-0594">Phospholipid biosynthesis</keyword>
<keyword id="KW-1208">Phospholipid metabolism</keyword>
<keyword id="KW-0670">Pyruvate</keyword>
<keyword id="KW-0865">Zymogen</keyword>
<gene>
    <name evidence="1" type="primary">psd</name>
    <name type="ordered locus">HS_1300</name>
</gene>
<reference key="1">
    <citation type="journal article" date="2007" name="J. Bacteriol.">
        <title>Complete genome sequence of Haemophilus somnus (Histophilus somni) strain 129Pt and comparison to Haemophilus ducreyi 35000HP and Haemophilus influenzae Rd.</title>
        <authorList>
            <person name="Challacombe J.F."/>
            <person name="Duncan A.J."/>
            <person name="Brettin T.S."/>
            <person name="Bruce D."/>
            <person name="Chertkov O."/>
            <person name="Detter J.C."/>
            <person name="Han C.S."/>
            <person name="Misra M."/>
            <person name="Richardson P."/>
            <person name="Tapia R."/>
            <person name="Thayer N."/>
            <person name="Xie G."/>
            <person name="Inzana T.J."/>
        </authorList>
    </citation>
    <scope>NUCLEOTIDE SEQUENCE [LARGE SCALE GENOMIC DNA]</scope>
    <source>
        <strain>129Pt</strain>
    </source>
</reference>
<feature type="chain" id="PRO_0000262117" description="Phosphatidylserine decarboxylase beta chain" evidence="1">
    <location>
        <begin position="1"/>
        <end position="260"/>
    </location>
</feature>
<feature type="chain" id="PRO_0000262118" description="Phosphatidylserine decarboxylase alpha chain" evidence="1">
    <location>
        <begin position="261"/>
        <end position="294"/>
    </location>
</feature>
<feature type="active site" description="Charge relay system; for autoendoproteolytic cleavage activity" evidence="1">
    <location>
        <position position="100"/>
    </location>
</feature>
<feature type="active site" description="Charge relay system; for autoendoproteolytic cleavage activity" evidence="1">
    <location>
        <position position="157"/>
    </location>
</feature>
<feature type="active site" description="Charge relay system; for autoendoproteolytic cleavage activity" evidence="1">
    <location>
        <position position="261"/>
    </location>
</feature>
<feature type="active site" description="Schiff-base intermediate with substrate; via pyruvic acid; for decarboxylase activity" evidence="1">
    <location>
        <position position="261"/>
    </location>
</feature>
<feature type="site" description="Cleavage (non-hydrolytic); by autocatalysis" evidence="1">
    <location>
        <begin position="260"/>
        <end position="261"/>
    </location>
</feature>
<feature type="modified residue" description="Pyruvic acid (Ser); by autocatalysis" evidence="1">
    <location>
        <position position="261"/>
    </location>
</feature>
<name>PSD_HISS1</name>
<sequence>MYNAEKKQPTYWQRLKIAFQYVMPQLYLTLAAGWLAKQKWGSVTHFIIKLFAKKYRVNMQEAEKTEFKDYASFNEFFIRPLKADARKIDENPTALCLPADGRISQYGHIEQQTLLQAKGHSFSLVDLLAGDTELAKEFEHGEFATIYLSPRDYHRVHMPCDATLRKMIYVPGDLFSVNPFLNEHIPNLLARNERVICVFDTEFGTMVQILVGATITASMSTVWAGIINPPRSAEVKEWTYSGESAVQLRKGQEMGAFQLGSTVINLFQADKVELANHLDVGVPVRVGEVLAYKK</sequence>
<accession>Q0I4T3</accession>
<evidence type="ECO:0000255" key="1">
    <source>
        <dbReference type="HAMAP-Rule" id="MF_00662"/>
    </source>
</evidence>
<dbReference type="EC" id="4.1.1.65" evidence="1"/>
<dbReference type="EMBL" id="CP000436">
    <property type="protein sequence ID" value="ABI25575.1"/>
    <property type="molecule type" value="Genomic_DNA"/>
</dbReference>
<dbReference type="SMR" id="Q0I4T3"/>
<dbReference type="KEGG" id="hso:HS_1300"/>
<dbReference type="eggNOG" id="COG0688">
    <property type="taxonomic scope" value="Bacteria"/>
</dbReference>
<dbReference type="HOGENOM" id="CLU_029061_4_1_6"/>
<dbReference type="UniPathway" id="UPA00558">
    <property type="reaction ID" value="UER00616"/>
</dbReference>
<dbReference type="GO" id="GO:0005886">
    <property type="term" value="C:plasma membrane"/>
    <property type="evidence" value="ECO:0007669"/>
    <property type="project" value="UniProtKB-SubCell"/>
</dbReference>
<dbReference type="GO" id="GO:0004609">
    <property type="term" value="F:phosphatidylserine decarboxylase activity"/>
    <property type="evidence" value="ECO:0007669"/>
    <property type="project" value="UniProtKB-UniRule"/>
</dbReference>
<dbReference type="GO" id="GO:0006646">
    <property type="term" value="P:phosphatidylethanolamine biosynthetic process"/>
    <property type="evidence" value="ECO:0007669"/>
    <property type="project" value="UniProtKB-UniRule"/>
</dbReference>
<dbReference type="HAMAP" id="MF_00662">
    <property type="entry name" value="PS_decarb_PSD_B_type1"/>
    <property type="match status" value="1"/>
</dbReference>
<dbReference type="InterPro" id="IPR003817">
    <property type="entry name" value="PS_Dcarbxylase"/>
</dbReference>
<dbReference type="InterPro" id="IPR033177">
    <property type="entry name" value="PSD-B"/>
</dbReference>
<dbReference type="InterPro" id="IPR033178">
    <property type="entry name" value="PSD_type1_pro"/>
</dbReference>
<dbReference type="NCBIfam" id="TIGR00163">
    <property type="entry name" value="PS_decarb"/>
    <property type="match status" value="1"/>
</dbReference>
<dbReference type="PANTHER" id="PTHR10067">
    <property type="entry name" value="PHOSPHATIDYLSERINE DECARBOXYLASE"/>
    <property type="match status" value="1"/>
</dbReference>
<dbReference type="PANTHER" id="PTHR10067:SF6">
    <property type="entry name" value="PHOSPHATIDYLSERINE DECARBOXYLASE PROENZYME, MITOCHONDRIAL"/>
    <property type="match status" value="1"/>
</dbReference>
<dbReference type="Pfam" id="PF02666">
    <property type="entry name" value="PS_Dcarbxylase"/>
    <property type="match status" value="1"/>
</dbReference>